<sequence length="52" mass="6342">MSLWLIYVLLLFWCAFNFCTVICNYCVPSVNFYYYSVRWMGLNFYLLCLLFA</sequence>
<proteinExistence type="predicted"/>
<protein>
    <recommendedName>
        <fullName>Uncharacterized protein E8</fullName>
    </recommendedName>
</protein>
<keyword id="KW-0244">Early protein</keyword>
<name>VE8_BPV4</name>
<accession>P08352</accession>
<organism>
    <name type="scientific">Bos taurus papillomavirus 4</name>
    <name type="common">Bovine papillomavirus 4</name>
    <dbReference type="NCBI Taxonomy" id="10562"/>
    <lineage>
        <taxon>Viruses</taxon>
        <taxon>Monodnaviria</taxon>
        <taxon>Shotokuvirae</taxon>
        <taxon>Cossaviricota</taxon>
        <taxon>Papovaviricetes</taxon>
        <taxon>Zurhausenvirales</taxon>
        <taxon>Papillomaviridae</taxon>
        <taxon>Firstpapillomavirinae</taxon>
        <taxon>Xipapillomavirus</taxon>
        <taxon>Xipapillomavirus 1</taxon>
    </lineage>
</organism>
<reference key="1">
    <citation type="journal article" date="1987" name="J. Gen. Virol.">
        <title>The nucleotide sequence and genome organization of bovine papillomavirus type 4.</title>
        <authorList>
            <person name="Patel K.R."/>
            <person name="Smith K.T."/>
            <person name="Campo M.S."/>
        </authorList>
    </citation>
    <scope>NUCLEOTIDE SEQUENCE [GENOMIC DNA]</scope>
</reference>
<feature type="chain" id="PRO_0000133473" description="Uncharacterized protein E8">
    <location>
        <begin position="1"/>
        <end position="52"/>
    </location>
</feature>
<dbReference type="EMBL" id="X05817">
    <property type="status" value="NOT_ANNOTATED_CDS"/>
    <property type="molecule type" value="Genomic_DNA"/>
</dbReference>
<dbReference type="PIR" id="A27129">
    <property type="entry name" value="W8WLB4"/>
</dbReference>
<dbReference type="Proteomes" id="UP000007613">
    <property type="component" value="Segment"/>
</dbReference>
<organismHost>
    <name type="scientific">Bos taurus</name>
    <name type="common">Bovine</name>
    <dbReference type="NCBI Taxonomy" id="9913"/>
</organismHost>